<keyword id="KW-0031">Aminopeptidase</keyword>
<keyword id="KW-0963">Cytoplasm</keyword>
<keyword id="KW-0378">Hydrolase</keyword>
<keyword id="KW-0464">Manganese</keyword>
<keyword id="KW-0479">Metal-binding</keyword>
<keyword id="KW-0645">Protease</keyword>
<accession>Q1MIZ4</accession>
<name>AMPA_RHIJ3</name>
<evidence type="ECO:0000255" key="1">
    <source>
        <dbReference type="HAMAP-Rule" id="MF_00181"/>
    </source>
</evidence>
<comment type="function">
    <text evidence="1">Presumably involved in the processing and regular turnover of intracellular proteins. Catalyzes the removal of unsubstituted N-terminal amino acids from various peptides.</text>
</comment>
<comment type="catalytic activity">
    <reaction evidence="1">
        <text>Release of an N-terminal amino acid, Xaa-|-Yaa-, in which Xaa is preferably Leu, but may be other amino acids including Pro although not Arg or Lys, and Yaa may be Pro. Amino acid amides and methyl esters are also readily hydrolyzed, but rates on arylamides are exceedingly low.</text>
        <dbReference type="EC" id="3.4.11.1"/>
    </reaction>
</comment>
<comment type="catalytic activity">
    <reaction evidence="1">
        <text>Release of an N-terminal amino acid, preferentially leucine, but not glutamic or aspartic acids.</text>
        <dbReference type="EC" id="3.4.11.10"/>
    </reaction>
</comment>
<comment type="cofactor">
    <cofactor evidence="1">
        <name>Mn(2+)</name>
        <dbReference type="ChEBI" id="CHEBI:29035"/>
    </cofactor>
    <text evidence="1">Binds 2 manganese ions per subunit.</text>
</comment>
<comment type="subcellular location">
    <subcellularLocation>
        <location evidence="1">Cytoplasm</location>
    </subcellularLocation>
</comment>
<comment type="similarity">
    <text evidence="1">Belongs to the peptidase M17 family.</text>
</comment>
<gene>
    <name evidence="1" type="primary">pepA</name>
    <name type="ordered locus">RL1571</name>
</gene>
<organism>
    <name type="scientific">Rhizobium johnstonii (strain DSM 114642 / LMG 32736 / 3841)</name>
    <name type="common">Rhizobium leguminosarum bv. viciae</name>
    <dbReference type="NCBI Taxonomy" id="216596"/>
    <lineage>
        <taxon>Bacteria</taxon>
        <taxon>Pseudomonadati</taxon>
        <taxon>Pseudomonadota</taxon>
        <taxon>Alphaproteobacteria</taxon>
        <taxon>Hyphomicrobiales</taxon>
        <taxon>Rhizobiaceae</taxon>
        <taxon>Rhizobium/Agrobacterium group</taxon>
        <taxon>Rhizobium</taxon>
        <taxon>Rhizobium johnstonii</taxon>
    </lineage>
</organism>
<protein>
    <recommendedName>
        <fullName evidence="1">Probable cytosol aminopeptidase</fullName>
        <ecNumber evidence="1">3.4.11.1</ecNumber>
    </recommendedName>
    <alternativeName>
        <fullName evidence="1">Leucine aminopeptidase</fullName>
        <shortName evidence="1">LAP</shortName>
        <ecNumber evidence="1">3.4.11.10</ecNumber>
    </alternativeName>
    <alternativeName>
        <fullName evidence="1">Leucyl aminopeptidase</fullName>
    </alternativeName>
</protein>
<reference key="1">
    <citation type="journal article" date="2006" name="Genome Biol.">
        <title>The genome of Rhizobium leguminosarum has recognizable core and accessory components.</title>
        <authorList>
            <person name="Young J.P.W."/>
            <person name="Crossman L.C."/>
            <person name="Johnston A.W.B."/>
            <person name="Thomson N.R."/>
            <person name="Ghazoui Z.F."/>
            <person name="Hull K.H."/>
            <person name="Wexler M."/>
            <person name="Curson A.R.J."/>
            <person name="Todd J.D."/>
            <person name="Poole P.S."/>
            <person name="Mauchline T.H."/>
            <person name="East A.K."/>
            <person name="Quail M.A."/>
            <person name="Churcher C."/>
            <person name="Arrowsmith C."/>
            <person name="Cherevach I."/>
            <person name="Chillingworth T."/>
            <person name="Clarke K."/>
            <person name="Cronin A."/>
            <person name="Davis P."/>
            <person name="Fraser A."/>
            <person name="Hance Z."/>
            <person name="Hauser H."/>
            <person name="Jagels K."/>
            <person name="Moule S."/>
            <person name="Mungall K."/>
            <person name="Norbertczak H."/>
            <person name="Rabbinowitsch E."/>
            <person name="Sanders M."/>
            <person name="Simmonds M."/>
            <person name="Whitehead S."/>
            <person name="Parkhill J."/>
        </authorList>
    </citation>
    <scope>NUCLEOTIDE SEQUENCE [LARGE SCALE GENOMIC DNA]</scope>
    <source>
        <strain>DSM 114642 / LMG 32736 / 3841</strain>
    </source>
</reference>
<feature type="chain" id="PRO_1000019966" description="Probable cytosol aminopeptidase">
    <location>
        <begin position="1"/>
        <end position="496"/>
    </location>
</feature>
<feature type="active site" evidence="1">
    <location>
        <position position="274"/>
    </location>
</feature>
<feature type="active site" evidence="1">
    <location>
        <position position="348"/>
    </location>
</feature>
<feature type="binding site" evidence="1">
    <location>
        <position position="262"/>
    </location>
    <ligand>
        <name>Mn(2+)</name>
        <dbReference type="ChEBI" id="CHEBI:29035"/>
        <label>2</label>
    </ligand>
</feature>
<feature type="binding site" evidence="1">
    <location>
        <position position="267"/>
    </location>
    <ligand>
        <name>Mn(2+)</name>
        <dbReference type="ChEBI" id="CHEBI:29035"/>
        <label>1</label>
    </ligand>
</feature>
<feature type="binding site" evidence="1">
    <location>
        <position position="267"/>
    </location>
    <ligand>
        <name>Mn(2+)</name>
        <dbReference type="ChEBI" id="CHEBI:29035"/>
        <label>2</label>
    </ligand>
</feature>
<feature type="binding site" evidence="1">
    <location>
        <position position="285"/>
    </location>
    <ligand>
        <name>Mn(2+)</name>
        <dbReference type="ChEBI" id="CHEBI:29035"/>
        <label>2</label>
    </ligand>
</feature>
<feature type="binding site" evidence="1">
    <location>
        <position position="344"/>
    </location>
    <ligand>
        <name>Mn(2+)</name>
        <dbReference type="ChEBI" id="CHEBI:29035"/>
        <label>1</label>
    </ligand>
</feature>
<feature type="binding site" evidence="1">
    <location>
        <position position="346"/>
    </location>
    <ligand>
        <name>Mn(2+)</name>
        <dbReference type="ChEBI" id="CHEBI:29035"/>
        <label>1</label>
    </ligand>
</feature>
<feature type="binding site" evidence="1">
    <location>
        <position position="346"/>
    </location>
    <ligand>
        <name>Mn(2+)</name>
        <dbReference type="ChEBI" id="CHEBI:29035"/>
        <label>2</label>
    </ligand>
</feature>
<dbReference type="EC" id="3.4.11.1" evidence="1"/>
<dbReference type="EC" id="3.4.11.10" evidence="1"/>
<dbReference type="EMBL" id="AM236080">
    <property type="protein sequence ID" value="CAK07066.1"/>
    <property type="molecule type" value="Genomic_DNA"/>
</dbReference>
<dbReference type="RefSeq" id="WP_011651255.1">
    <property type="nucleotide sequence ID" value="NC_008380.1"/>
</dbReference>
<dbReference type="SMR" id="Q1MIZ4"/>
<dbReference type="EnsemblBacteria" id="CAK07066">
    <property type="protein sequence ID" value="CAK07066"/>
    <property type="gene ID" value="RL1571"/>
</dbReference>
<dbReference type="KEGG" id="rle:RL1571"/>
<dbReference type="eggNOG" id="COG0260">
    <property type="taxonomic scope" value="Bacteria"/>
</dbReference>
<dbReference type="HOGENOM" id="CLU_013734_6_0_5"/>
<dbReference type="Proteomes" id="UP000006575">
    <property type="component" value="Chromosome"/>
</dbReference>
<dbReference type="GO" id="GO:0005737">
    <property type="term" value="C:cytoplasm"/>
    <property type="evidence" value="ECO:0007669"/>
    <property type="project" value="UniProtKB-SubCell"/>
</dbReference>
<dbReference type="GO" id="GO:0030145">
    <property type="term" value="F:manganese ion binding"/>
    <property type="evidence" value="ECO:0007669"/>
    <property type="project" value="UniProtKB-UniRule"/>
</dbReference>
<dbReference type="GO" id="GO:0070006">
    <property type="term" value="F:metalloaminopeptidase activity"/>
    <property type="evidence" value="ECO:0007669"/>
    <property type="project" value="InterPro"/>
</dbReference>
<dbReference type="GO" id="GO:0006508">
    <property type="term" value="P:proteolysis"/>
    <property type="evidence" value="ECO:0007669"/>
    <property type="project" value="UniProtKB-KW"/>
</dbReference>
<dbReference type="CDD" id="cd00433">
    <property type="entry name" value="Peptidase_M17"/>
    <property type="match status" value="1"/>
</dbReference>
<dbReference type="Gene3D" id="3.40.220.10">
    <property type="entry name" value="Leucine Aminopeptidase, subunit E, domain 1"/>
    <property type="match status" value="1"/>
</dbReference>
<dbReference type="Gene3D" id="3.40.630.10">
    <property type="entry name" value="Zn peptidases"/>
    <property type="match status" value="1"/>
</dbReference>
<dbReference type="HAMAP" id="MF_00181">
    <property type="entry name" value="Cytosol_peptidase_M17"/>
    <property type="match status" value="1"/>
</dbReference>
<dbReference type="InterPro" id="IPR011356">
    <property type="entry name" value="Leucine_aapep/pepB"/>
</dbReference>
<dbReference type="InterPro" id="IPR043472">
    <property type="entry name" value="Macro_dom-like"/>
</dbReference>
<dbReference type="InterPro" id="IPR000819">
    <property type="entry name" value="Peptidase_M17_C"/>
</dbReference>
<dbReference type="InterPro" id="IPR023042">
    <property type="entry name" value="Peptidase_M17_leu_NH2_pept"/>
</dbReference>
<dbReference type="InterPro" id="IPR008283">
    <property type="entry name" value="Peptidase_M17_N"/>
</dbReference>
<dbReference type="NCBIfam" id="NF002073">
    <property type="entry name" value="PRK00913.1-2"/>
    <property type="match status" value="1"/>
</dbReference>
<dbReference type="NCBIfam" id="NF002074">
    <property type="entry name" value="PRK00913.1-4"/>
    <property type="match status" value="1"/>
</dbReference>
<dbReference type="NCBIfam" id="NF002075">
    <property type="entry name" value="PRK00913.2-2"/>
    <property type="match status" value="1"/>
</dbReference>
<dbReference type="NCBIfam" id="NF002077">
    <property type="entry name" value="PRK00913.2-4"/>
    <property type="match status" value="1"/>
</dbReference>
<dbReference type="NCBIfam" id="NF002083">
    <property type="entry name" value="PRK00913.3-5"/>
    <property type="match status" value="1"/>
</dbReference>
<dbReference type="PANTHER" id="PTHR11963:SF23">
    <property type="entry name" value="CYTOSOL AMINOPEPTIDASE"/>
    <property type="match status" value="1"/>
</dbReference>
<dbReference type="PANTHER" id="PTHR11963">
    <property type="entry name" value="LEUCINE AMINOPEPTIDASE-RELATED"/>
    <property type="match status" value="1"/>
</dbReference>
<dbReference type="Pfam" id="PF00883">
    <property type="entry name" value="Peptidase_M17"/>
    <property type="match status" value="1"/>
</dbReference>
<dbReference type="Pfam" id="PF02789">
    <property type="entry name" value="Peptidase_M17_N"/>
    <property type="match status" value="1"/>
</dbReference>
<dbReference type="PRINTS" id="PR00481">
    <property type="entry name" value="LAMNOPPTDASE"/>
</dbReference>
<dbReference type="SUPFAM" id="SSF52949">
    <property type="entry name" value="Macro domain-like"/>
    <property type="match status" value="1"/>
</dbReference>
<dbReference type="SUPFAM" id="SSF53187">
    <property type="entry name" value="Zn-dependent exopeptidases"/>
    <property type="match status" value="1"/>
</dbReference>
<dbReference type="PROSITE" id="PS00631">
    <property type="entry name" value="CYTOSOL_AP"/>
    <property type="match status" value="1"/>
</dbReference>
<sequence>MSIKLEISFSKSAKLNGGLAILLKTAEADSAAGAETVDPAGVIVKAARIARYSAKSMNGLDIVVPEGAPVDRIVVIGLGKAAELTAHDWLKAGGAAASRIKNTDKAAVFIDVPGLTTSPRAAADFALGMLLRAYSFDTYKTKKGDEEEKPAKSVKVTIVTADPAGAKKAFSDSEAIAGGVNLARDLVNEPPNVLGPVEFAAKAKELEKLGVEVEILTEREMRRLGMGALLGVAQGSVRPPRLAVMQWKGGKGKDRPVAFIGKGVVFDTGGISIKPAAGMEDMKGDMGGAAAVTGLMHVLASRKAAVNAVGIIGLVENMPDGNAQRPGDIVTSMSGQTIEVINTDAEGRLVLCDALWYCNDRFKPQFMINLATLTGAIIVALGNVHAGLFSNDDQLSAQLTAAGLSSNEKLWRMPLGRDYDKLIDSKFADMKNTGGRQAGSITAAHFLKRFVQDTPWAHLDIAGTAMGSPQDEINQSWGSGFGVRLLDELVRAHYES</sequence>
<proteinExistence type="inferred from homology"/>